<evidence type="ECO:0000255" key="1">
    <source>
        <dbReference type="HAMAP-Rule" id="MF_02204"/>
    </source>
</evidence>
<evidence type="ECO:0000256" key="2">
    <source>
        <dbReference type="SAM" id="MobiDB-lite"/>
    </source>
</evidence>
<evidence type="ECO:0000269" key="3">
    <source>
    </source>
</evidence>
<evidence type="ECO:0000269" key="4">
    <source>
    </source>
</evidence>
<evidence type="ECO:0000269" key="5">
    <source>
    </source>
</evidence>
<evidence type="ECO:0000269" key="6">
    <source>
    </source>
</evidence>
<evidence type="ECO:0000269" key="7">
    <source>
    </source>
</evidence>
<evidence type="ECO:0000269" key="8">
    <source>
    </source>
</evidence>
<evidence type="ECO:0000269" key="9">
    <source>
    </source>
</evidence>
<evidence type="ECO:0000269" key="10">
    <source>
    </source>
</evidence>
<evidence type="ECO:0000269" key="11">
    <source>
    </source>
</evidence>
<evidence type="ECO:0000269" key="12">
    <source>
    </source>
</evidence>
<evidence type="ECO:0000269" key="13">
    <source>
    </source>
</evidence>
<evidence type="ECO:0000303" key="14">
    <source>
    </source>
</evidence>
<evidence type="ECO:0000303" key="15">
    <source>
    </source>
</evidence>
<evidence type="ECO:0000305" key="16"/>
<evidence type="ECO:0000305" key="17">
    <source>
    </source>
</evidence>
<evidence type="ECO:0000305" key="18">
    <source>
    </source>
</evidence>
<evidence type="ECO:0007744" key="19">
    <source>
        <dbReference type="PDB" id="1OAP"/>
    </source>
</evidence>
<evidence type="ECO:0007744" key="20">
    <source>
        <dbReference type="PDB" id="2HQS"/>
    </source>
</evidence>
<evidence type="ECO:0007744" key="21">
    <source>
        <dbReference type="PDB" id="2W8B"/>
    </source>
</evidence>
<evidence type="ECO:0007829" key="22">
    <source>
        <dbReference type="PDB" id="2HQS"/>
    </source>
</evidence>
<proteinExistence type="evidence at protein level"/>
<comment type="function">
    <text evidence="3 6 9 10">Part of the Tol-Pal system, which plays a role in outer membrane invagination during cell division and is important for maintaining outer membrane integrity (PubMed:11115123, PubMed:17233825). The Tol-Pal system is also required for polar localization of chemoreceptors clusters (PubMed:24720726). The system also appears to be required for the activity of several outer membrane-localized enzymes with cell wall remodeling activity (PubMed:32152098).</text>
</comment>
<comment type="subunit">
    <text evidence="3 4 7 8 12 13 17">The Tol-Pal system is composed of five core proteins: the inner membrane proteins TolA, TolQ and TolR, the periplasmic protein TolB and the outer membrane protein Pal. They form a network linking the inner and outer membranes and the peptidoglycan layer (PubMed:17233825). Pal interacts with TolB (PubMed:17375930, PubMed:19696740, PubMed:7744736). Interacts with the C-terminal domain of TolA. This interaction is proton motive force dependent and requires TolQ and TolR (PubMed:11115123, PubMed:11722743). Can form a complex with TolB and OmpA (PubMed:9701827).</text>
</comment>
<comment type="interaction">
    <interactant intactId="EBI-1124760">
        <id>P0A912</id>
    </interactant>
    <interactant intactId="EBI-553532">
        <id>P61316</id>
        <label>lolA</label>
    </interactant>
    <organismsDiffer>false</organismsDiffer>
    <experiments>2</experiments>
</comment>
<comment type="interaction">
    <interactant intactId="EBI-1124760">
        <id>P0A912</id>
    </interactant>
    <interactant intactId="EBI-1122794">
        <id>P61320</id>
        <label>lolB</label>
    </interactant>
    <organismsDiffer>false</organismsDiffer>
    <experiments>2</experiments>
</comment>
<comment type="interaction">
    <interactant intactId="EBI-1124760">
        <id>P0A912</id>
    </interactant>
    <interactant intactId="EBI-1125190">
        <id>P75958</id>
        <label>lolE</label>
    </interactant>
    <organismsDiffer>false</organismsDiffer>
    <experiments>2</experiments>
</comment>
<comment type="interaction">
    <interactant intactId="EBI-1124760">
        <id>P0A912</id>
    </interactant>
    <interactant intactId="EBI-7180728">
        <id>P0A855</id>
        <label>tolB</label>
    </interactant>
    <organismsDiffer>false</organismsDiffer>
    <experiments>4</experiments>
</comment>
<comment type="subcellular location">
    <subcellularLocation>
        <location evidence="1 5">Cell outer membrane</location>
        <topology evidence="1 5">Lipid-anchor</topology>
    </subcellularLocation>
    <text evidence="6">Accumulates at cell constriction sites. Recruitment to the division site is dependent on FtsN activity.</text>
</comment>
<comment type="disruption phenotype">
    <text evidence="6 10">Mutants lacking the tol-pal cluster suffer delayed outer membrane invagination and contain large outer membrane blebs at constriction sites and cell poles (PubMed:17233825). Tol-pal mutants fail to complete division and form cell chains, and fail to process denuded peptidoglycans at the septum (PubMed:32152098).</text>
</comment>
<comment type="similarity">
    <text evidence="1 16">Belongs to the Pal lipoprotein family.</text>
</comment>
<accession>P0A912</accession>
<accession>P07176</accession>
<keyword id="KW-0002">3D-structure</keyword>
<keyword id="KW-0131">Cell cycle</keyword>
<keyword id="KW-0132">Cell division</keyword>
<keyword id="KW-0998">Cell outer membrane</keyword>
<keyword id="KW-0449">Lipoprotein</keyword>
<keyword id="KW-0472">Membrane</keyword>
<keyword id="KW-0564">Palmitate</keyword>
<keyword id="KW-1185">Reference proteome</keyword>
<keyword id="KW-0732">Signal</keyword>
<feature type="signal peptide" evidence="1">
    <location>
        <begin position="1"/>
        <end position="21"/>
    </location>
</feature>
<feature type="chain" id="PRO_0000020120" description="Peptidoglycan-associated lipoprotein" evidence="1">
    <location>
        <begin position="22"/>
        <end position="173"/>
    </location>
</feature>
<feature type="domain" description="OmpA-like" evidence="1">
    <location>
        <begin position="60"/>
        <end position="173"/>
    </location>
</feature>
<feature type="region of interest" description="Disordered" evidence="2">
    <location>
        <begin position="30"/>
        <end position="58"/>
    </location>
</feature>
<feature type="compositionally biased region" description="Gly residues" evidence="2">
    <location>
        <begin position="35"/>
        <end position="50"/>
    </location>
</feature>
<feature type="lipid moiety-binding region" description="N-palmitoyl cysteine" evidence="1 11">
    <location>
        <position position="22"/>
    </location>
</feature>
<feature type="lipid moiety-binding region" description="S-diacylglycerol cysteine" evidence="1 18">
    <location>
        <position position="22"/>
    </location>
</feature>
<feature type="strand" evidence="22">
    <location>
        <begin position="69"/>
        <end position="72"/>
    </location>
</feature>
<feature type="helix" evidence="22">
    <location>
        <begin position="82"/>
        <end position="84"/>
    </location>
</feature>
<feature type="helix" evidence="22">
    <location>
        <begin position="85"/>
        <end position="97"/>
    </location>
</feature>
<feature type="strand" evidence="22">
    <location>
        <begin position="103"/>
        <end position="107"/>
    </location>
</feature>
<feature type="strand" evidence="22">
    <location>
        <begin position="111"/>
        <end position="113"/>
    </location>
</feature>
<feature type="helix" evidence="22">
    <location>
        <begin position="115"/>
        <end position="135"/>
    </location>
</feature>
<feature type="helix" evidence="22">
    <location>
        <begin position="140"/>
        <end position="142"/>
    </location>
</feature>
<feature type="strand" evidence="22">
    <location>
        <begin position="143"/>
        <end position="147"/>
    </location>
</feature>
<feature type="helix" evidence="22">
    <location>
        <begin position="160"/>
        <end position="166"/>
    </location>
</feature>
<feature type="strand" evidence="22">
    <location>
        <begin position="167"/>
        <end position="172"/>
    </location>
</feature>
<sequence>MQLNKVLKGLMIALPVMAIAACSSNKNASNDGSEGMLGAGTGMDANGGNGNMSSEEQARLQMQQLQQNNIVYFDLDKYDIRSDFAQMLDAHANFLRSNPSYKVTVEGHADERGTPEYNISLGERRANAVKMYLQGKGVSADQISIVSYGKEKPAVLGHDEAAYSKNRRAVLVY</sequence>
<organism>
    <name type="scientific">Escherichia coli (strain K12)</name>
    <dbReference type="NCBI Taxonomy" id="83333"/>
    <lineage>
        <taxon>Bacteria</taxon>
        <taxon>Pseudomonadati</taxon>
        <taxon>Pseudomonadota</taxon>
        <taxon>Gammaproteobacteria</taxon>
        <taxon>Enterobacterales</taxon>
        <taxon>Enterobacteriaceae</taxon>
        <taxon>Escherichia</taxon>
    </lineage>
</organism>
<reference key="1">
    <citation type="journal article" date="1987" name="Eur. J. Biochem.">
        <title>Nucleotide sequence of the gene for the peptidoglycan-associated lipoprotein of Escherichia coli K12.</title>
        <authorList>
            <person name="Chen R."/>
            <person name="Henning U."/>
        </authorList>
    </citation>
    <scope>NUCLEOTIDE SEQUENCE [GENOMIC DNA]</scope>
    <scope>DIACYLGLYCEROL AT CYS-22</scope>
    <scope>PALMITOYLATION AT CYS-22</scope>
    <source>
        <strain>K12</strain>
    </source>
</reference>
<reference key="2">
    <citation type="journal article" date="1992" name="Mol. Microbiol.">
        <title>The excC gene of Escherichia coli K-12 required for cell envelope integrity encodes the peptidoglycan-associated lipoprotein (PAL).</title>
        <authorList>
            <person name="Lazzaroni J.-C."/>
            <person name="Portalier R."/>
        </authorList>
    </citation>
    <scope>NUCLEOTIDE SEQUENCE [GENOMIC DNA]</scope>
    <scope>SUBCELLULAR LOCATION</scope>
    <source>
        <strain>K12</strain>
    </source>
</reference>
<reference key="3">
    <citation type="journal article" date="1996" name="DNA Res.">
        <title>A 718-kb DNA sequence of the Escherichia coli K-12 genome corresponding to the 12.7-28.0 min region on the linkage map.</title>
        <authorList>
            <person name="Oshima T."/>
            <person name="Aiba H."/>
            <person name="Baba T."/>
            <person name="Fujita K."/>
            <person name="Hayashi K."/>
            <person name="Honjo A."/>
            <person name="Ikemoto K."/>
            <person name="Inada T."/>
            <person name="Itoh T."/>
            <person name="Kajihara M."/>
            <person name="Kanai K."/>
            <person name="Kashimoto K."/>
            <person name="Kimura S."/>
            <person name="Kitagawa M."/>
            <person name="Makino K."/>
            <person name="Masuda S."/>
            <person name="Miki T."/>
            <person name="Mizobuchi K."/>
            <person name="Mori H."/>
            <person name="Motomura K."/>
            <person name="Nakamura Y."/>
            <person name="Nashimoto H."/>
            <person name="Nishio Y."/>
            <person name="Saito N."/>
            <person name="Sampei G."/>
            <person name="Seki Y."/>
            <person name="Tagami H."/>
            <person name="Takemoto K."/>
            <person name="Wada C."/>
            <person name="Yamamoto Y."/>
            <person name="Yano M."/>
            <person name="Horiuchi T."/>
        </authorList>
    </citation>
    <scope>NUCLEOTIDE SEQUENCE [LARGE SCALE GENOMIC DNA]</scope>
    <source>
        <strain>K12 / W3110 / ATCC 27325 / DSM 5911</strain>
    </source>
</reference>
<reference key="4">
    <citation type="journal article" date="1997" name="Science">
        <title>The complete genome sequence of Escherichia coli K-12.</title>
        <authorList>
            <person name="Blattner F.R."/>
            <person name="Plunkett G. III"/>
            <person name="Bloch C.A."/>
            <person name="Perna N.T."/>
            <person name="Burland V."/>
            <person name="Riley M."/>
            <person name="Collado-Vides J."/>
            <person name="Glasner J.D."/>
            <person name="Rode C.K."/>
            <person name="Mayhew G.F."/>
            <person name="Gregor J."/>
            <person name="Davis N.W."/>
            <person name="Kirkpatrick H.A."/>
            <person name="Goeden M.A."/>
            <person name="Rose D.J."/>
            <person name="Mau B."/>
            <person name="Shao Y."/>
        </authorList>
    </citation>
    <scope>NUCLEOTIDE SEQUENCE [LARGE SCALE GENOMIC DNA]</scope>
    <source>
        <strain>K12 / MG1655 / ATCC 47076</strain>
    </source>
</reference>
<reference key="5">
    <citation type="journal article" date="2006" name="Mol. Syst. Biol.">
        <title>Highly accurate genome sequences of Escherichia coli K-12 strains MG1655 and W3110.</title>
        <authorList>
            <person name="Hayashi K."/>
            <person name="Morooka N."/>
            <person name="Yamamoto Y."/>
            <person name="Fujita K."/>
            <person name="Isono K."/>
            <person name="Choi S."/>
            <person name="Ohtsubo E."/>
            <person name="Baba T."/>
            <person name="Wanner B.L."/>
            <person name="Mori H."/>
            <person name="Horiuchi T."/>
        </authorList>
    </citation>
    <scope>NUCLEOTIDE SEQUENCE [LARGE SCALE GENOMIC DNA]</scope>
    <source>
        <strain>K12 / W3110 / ATCC 27325 / DSM 5911</strain>
    </source>
</reference>
<reference key="6">
    <citation type="journal article" date="1989" name="J. Bacteriol.">
        <title>Nucleotide sequences of the tolA and tolB genes and localization of their products, components of a multistep translocation system in Escherichia coli.</title>
        <authorList>
            <person name="Levengood S.K."/>
            <person name="Webster R.E."/>
        </authorList>
    </citation>
    <scope>NUCLEOTIDE SEQUENCE [GENOMIC DNA] OF 1-30</scope>
    <source>
        <strain>K12 / JM105 / ATCC 47016</strain>
    </source>
</reference>
<reference key="7">
    <citation type="journal article" date="1995" name="J. Biol. Chem.">
        <title>Peptidoglycan-associated lipoprotein-TolB interaction. A possible key to explaining the formation of contact sites between the inner and outer membranes of Escherichia coli.</title>
        <authorList>
            <person name="Bouveret E."/>
            <person name="Derouiche R."/>
            <person name="Rigal A."/>
            <person name="Lloubes R."/>
            <person name="Lazdunski C."/>
            <person name="Benedetti H."/>
        </authorList>
    </citation>
    <scope>INTERACTION WITH TOLB</scope>
</reference>
<reference key="8">
    <citation type="journal article" date="1998" name="Mol. Microbiol.">
        <title>TolB protein of Escherichia coli K-12 interacts with the outer membrane peptidoglycan-associated proteins Pal, Lpp and OmpA.</title>
        <authorList>
            <person name="Clavel T."/>
            <person name="Germon P."/>
            <person name="Vianney A."/>
            <person name="Portalier R."/>
            <person name="Lazzaroni J.-C."/>
        </authorList>
    </citation>
    <scope>INTERACTION WITH TOLB AND OMPA</scope>
</reference>
<reference key="9">
    <citation type="journal article" date="2000" name="Mol. Microbiol.">
        <title>Proton motive force drives the interaction of the inner membrane TolA and outer membrane pal proteins in Escherichia coli.</title>
        <authorList>
            <person name="Cascales E."/>
            <person name="Gavioli M."/>
            <person name="Sturgis J.N."/>
            <person name="Lloubes R."/>
        </authorList>
    </citation>
    <scope>FUNCTION</scope>
    <scope>INTERACTION WITH TOLA</scope>
</reference>
<reference key="10">
    <citation type="journal article" date="2001" name="Mol. Microbiol.">
        <title>The TolQ-TolR proteins energize TolA and share homologies with the flagellar motor proteins MotA-MotB.</title>
        <authorList>
            <person name="Cascales E."/>
            <person name="Lloubes R."/>
            <person name="Sturgis J.N."/>
        </authorList>
    </citation>
    <scope>INTERACTION WITH TOLA</scope>
</reference>
<reference key="11">
    <citation type="journal article" date="2007" name="Mol. Microbiol.">
        <title>The trans-envelope Tol-Pal complex is part of the cell division machinery and required for proper outer-membrane invagination during cell constriction in E. coli.</title>
        <authorList>
            <person name="Gerding M.A."/>
            <person name="Ogata Y."/>
            <person name="Pecora N.D."/>
            <person name="Niki H."/>
            <person name="de Boer P.A."/>
        </authorList>
    </citation>
    <scope>FUNCTION</scope>
    <scope>SUBUNIT</scope>
    <scope>SUBCELLULAR LOCATION</scope>
    <scope>DISRUPTION PHENOTYPE</scope>
    <source>
        <strain>K12 / MG1655 / ATCC 47076</strain>
    </source>
</reference>
<reference key="12">
    <citation type="journal article" date="2014" name="Mol. Microbiol.">
        <title>Polar localization of Escherichia coli chemoreceptors requires an intact Tol-Pal complex.</title>
        <authorList>
            <person name="Santos T.M."/>
            <person name="Lin T.Y."/>
            <person name="Rajendran M."/>
            <person name="Anderson S.M."/>
            <person name="Weibel D.B."/>
        </authorList>
    </citation>
    <scope>FUNCTION</scope>
</reference>
<reference key="13">
    <citation type="journal article" date="2020" name="Proc. Natl. Acad. Sci. U.S.A.">
        <title>The Tol-Pal system is required for peptidoglycan-cleaving enzymes to complete bacterial cell division.</title>
        <authorList>
            <person name="Yakhnina A.A."/>
            <person name="Bernhardt T.G."/>
        </authorList>
    </citation>
    <scope>FUNCTION</scope>
    <scope>DISRUPTION PHENOTYPE</scope>
</reference>
<reference evidence="19" key="14">
    <citation type="journal article" date="2001" name="Acta Crystallogr. D">
        <title>Crystallization and preliminary crystallographic study of the peptidoglycan-associated lipoprotein from Escherichia coli.</title>
        <authorList>
            <person name="Abergel C."/>
            <person name="Walburger A."/>
            <person name="Chenivesse S."/>
            <person name="Lazdunski C."/>
        </authorList>
    </citation>
    <scope>X-RAY CRYSTALLOGRAPHY (1.93 ANGSTROMS) OF 65-173</scope>
</reference>
<reference evidence="20" key="15">
    <citation type="journal article" date="2007" name="J. Am. Chem. Soc.">
        <title>Molecular mimicry enables competitive recruitment by a natively disordered protein.</title>
        <authorList>
            <person name="Bonsor D.A."/>
            <person name="Grishkovskaya I."/>
            <person name="Dodson E.J."/>
            <person name="Kleanthous C."/>
        </authorList>
    </citation>
    <scope>X-RAY CRYSTALLOGRAPHY (1.50 ANGSTROMS) OF 64-173 IN COMPLEX WITH TOLB</scope>
</reference>
<reference evidence="21" key="16">
    <citation type="journal article" date="2009" name="EMBO J.">
        <title>Allosteric beta-propeller signalling in TolB and its manipulation by translocating colicins.</title>
        <authorList>
            <person name="Bonsor D.A."/>
            <person name="Hecht O."/>
            <person name="Vankemmelbeke M."/>
            <person name="Sharma A."/>
            <person name="Krachler A.M."/>
            <person name="Housden N.G."/>
            <person name="Lilly K.J."/>
            <person name="James R."/>
            <person name="Moore G.R."/>
            <person name="Kleanthous C."/>
        </authorList>
    </citation>
    <scope>X-RAY CRYSTALLOGRAPHY (1.86 ANGSTROMS) OF 64-173 IN COMPLEX WITH TOLB</scope>
</reference>
<dbReference type="EMBL" id="X05123">
    <property type="protein sequence ID" value="CAA28771.1"/>
    <property type="molecule type" value="Genomic_DNA"/>
</dbReference>
<dbReference type="EMBL" id="X65796">
    <property type="protein sequence ID" value="CAA46673.1"/>
    <property type="molecule type" value="Genomic_DNA"/>
</dbReference>
<dbReference type="EMBL" id="U00096">
    <property type="protein sequence ID" value="AAC73835.1"/>
    <property type="molecule type" value="Genomic_DNA"/>
</dbReference>
<dbReference type="EMBL" id="AP009048">
    <property type="protein sequence ID" value="BAA35407.1"/>
    <property type="molecule type" value="Genomic_DNA"/>
</dbReference>
<dbReference type="EMBL" id="M28232">
    <property type="status" value="NOT_ANNOTATED_CDS"/>
    <property type="molecule type" value="Genomic_DNA"/>
</dbReference>
<dbReference type="PIR" id="A27534">
    <property type="entry name" value="LPECPG"/>
</dbReference>
<dbReference type="RefSeq" id="NP_415269.1">
    <property type="nucleotide sequence ID" value="NC_000913.3"/>
</dbReference>
<dbReference type="RefSeq" id="WP_001295306.1">
    <property type="nucleotide sequence ID" value="NZ_STEB01000035.1"/>
</dbReference>
<dbReference type="PDB" id="1OAP">
    <property type="method" value="X-ray"/>
    <property type="resolution" value="1.93 A"/>
    <property type="chains" value="A=65-173"/>
</dbReference>
<dbReference type="PDB" id="2HQS">
    <property type="method" value="X-ray"/>
    <property type="resolution" value="1.50 A"/>
    <property type="chains" value="C/E/G/H=65-173"/>
</dbReference>
<dbReference type="PDB" id="2W8B">
    <property type="method" value="X-ray"/>
    <property type="resolution" value="1.86 A"/>
    <property type="chains" value="C/E/G/H=65-173"/>
</dbReference>
<dbReference type="PDBsum" id="1OAP"/>
<dbReference type="PDBsum" id="2HQS"/>
<dbReference type="PDBsum" id="2W8B"/>
<dbReference type="SMR" id="P0A912"/>
<dbReference type="BioGRID" id="4260724">
    <property type="interactions" value="261"/>
</dbReference>
<dbReference type="BioGRID" id="849398">
    <property type="interactions" value="1"/>
</dbReference>
<dbReference type="ComplexPortal" id="CPX-5782">
    <property type="entry name" value="Tol-Pal cell envelope complex"/>
</dbReference>
<dbReference type="DIP" id="DIP-51001N"/>
<dbReference type="FunCoup" id="P0A912">
    <property type="interactions" value="136"/>
</dbReference>
<dbReference type="IntAct" id="P0A912">
    <property type="interactions" value="9"/>
</dbReference>
<dbReference type="MINT" id="P0A912"/>
<dbReference type="STRING" id="511145.b0741"/>
<dbReference type="jPOST" id="P0A912"/>
<dbReference type="PaxDb" id="511145-b0741"/>
<dbReference type="EnsemblBacteria" id="AAC73835">
    <property type="protein sequence ID" value="AAC73835"/>
    <property type="gene ID" value="b0741"/>
</dbReference>
<dbReference type="GeneID" id="93776743"/>
<dbReference type="GeneID" id="945004"/>
<dbReference type="KEGG" id="ecj:JW0731"/>
<dbReference type="KEGG" id="eco:b0741"/>
<dbReference type="KEGG" id="ecoc:C3026_03720"/>
<dbReference type="PATRIC" id="fig|1411691.4.peg.1531"/>
<dbReference type="EchoBASE" id="EB0678"/>
<dbReference type="eggNOG" id="COG2885">
    <property type="taxonomic scope" value="Bacteria"/>
</dbReference>
<dbReference type="HOGENOM" id="CLU_016890_9_4_6"/>
<dbReference type="InParanoid" id="P0A912"/>
<dbReference type="OMA" id="STESCWS"/>
<dbReference type="OrthoDB" id="9809164at2"/>
<dbReference type="PhylomeDB" id="P0A912"/>
<dbReference type="BioCyc" id="EcoCyc:EG10684-MONOMER"/>
<dbReference type="EvolutionaryTrace" id="P0A912"/>
<dbReference type="PRO" id="PR:P0A912"/>
<dbReference type="Proteomes" id="UP000000625">
    <property type="component" value="Chromosome"/>
</dbReference>
<dbReference type="GO" id="GO:0032153">
    <property type="term" value="C:cell division site"/>
    <property type="evidence" value="ECO:0000314"/>
    <property type="project" value="EcoCyc"/>
</dbReference>
<dbReference type="GO" id="GO:0009279">
    <property type="term" value="C:cell outer membrane"/>
    <property type="evidence" value="ECO:0000314"/>
    <property type="project" value="EcoCyc"/>
</dbReference>
<dbReference type="GO" id="GO:0016020">
    <property type="term" value="C:membrane"/>
    <property type="evidence" value="ECO:0000303"/>
    <property type="project" value="ComplexPortal"/>
</dbReference>
<dbReference type="GO" id="GO:0051301">
    <property type="term" value="P:cell division"/>
    <property type="evidence" value="ECO:0000314"/>
    <property type="project" value="EcoCyc"/>
</dbReference>
<dbReference type="GO" id="GO:0090529">
    <property type="term" value="P:cell septum assembly"/>
    <property type="evidence" value="ECO:0000269"/>
    <property type="project" value="EcoCyc"/>
</dbReference>
<dbReference type="GO" id="GO:1905153">
    <property type="term" value="P:regulation of membrane invagination"/>
    <property type="evidence" value="ECO:0000303"/>
    <property type="project" value="ComplexPortal"/>
</dbReference>
<dbReference type="CDD" id="cd07185">
    <property type="entry name" value="OmpA_C-like"/>
    <property type="match status" value="1"/>
</dbReference>
<dbReference type="FunFam" id="3.30.1330.60:FF:000002">
    <property type="entry name" value="Peptidoglycan-associated lipoprotein"/>
    <property type="match status" value="1"/>
</dbReference>
<dbReference type="Gene3D" id="3.30.1330.60">
    <property type="entry name" value="OmpA-like domain"/>
    <property type="match status" value="1"/>
</dbReference>
<dbReference type="HAMAP" id="MF_02204">
    <property type="entry name" value="Pal"/>
    <property type="match status" value="1"/>
</dbReference>
<dbReference type="InterPro" id="IPR050330">
    <property type="entry name" value="Bact_OuterMem_StrucFunc"/>
</dbReference>
<dbReference type="InterPro" id="IPR006664">
    <property type="entry name" value="OMP_bac"/>
</dbReference>
<dbReference type="InterPro" id="IPR006665">
    <property type="entry name" value="OmpA-like"/>
</dbReference>
<dbReference type="InterPro" id="IPR006690">
    <property type="entry name" value="OMPA-like_CS"/>
</dbReference>
<dbReference type="InterPro" id="IPR036737">
    <property type="entry name" value="OmpA-like_sf"/>
</dbReference>
<dbReference type="InterPro" id="IPR039001">
    <property type="entry name" value="Pal"/>
</dbReference>
<dbReference type="InterPro" id="IPR014169">
    <property type="entry name" value="Pal_lipo_C"/>
</dbReference>
<dbReference type="NCBIfam" id="TIGR02802">
    <property type="entry name" value="Pal_lipo"/>
    <property type="match status" value="1"/>
</dbReference>
<dbReference type="NCBIfam" id="NF008067">
    <property type="entry name" value="PRK10802.1"/>
    <property type="match status" value="1"/>
</dbReference>
<dbReference type="PANTHER" id="PTHR30329:SF21">
    <property type="entry name" value="LIPOPROTEIN YIAD-RELATED"/>
    <property type="match status" value="1"/>
</dbReference>
<dbReference type="PANTHER" id="PTHR30329">
    <property type="entry name" value="STATOR ELEMENT OF FLAGELLAR MOTOR COMPLEX"/>
    <property type="match status" value="1"/>
</dbReference>
<dbReference type="Pfam" id="PF00691">
    <property type="entry name" value="OmpA"/>
    <property type="match status" value="1"/>
</dbReference>
<dbReference type="PRINTS" id="PR01021">
    <property type="entry name" value="OMPADOMAIN"/>
</dbReference>
<dbReference type="SUPFAM" id="SSF103088">
    <property type="entry name" value="OmpA-like"/>
    <property type="match status" value="1"/>
</dbReference>
<dbReference type="PROSITE" id="PS01068">
    <property type="entry name" value="OMPA_1"/>
    <property type="match status" value="1"/>
</dbReference>
<dbReference type="PROSITE" id="PS51123">
    <property type="entry name" value="OMPA_2"/>
    <property type="match status" value="1"/>
</dbReference>
<dbReference type="PROSITE" id="PS51257">
    <property type="entry name" value="PROKAR_LIPOPROTEIN"/>
    <property type="match status" value="1"/>
</dbReference>
<gene>
    <name evidence="1 15" type="primary">pal</name>
    <name evidence="14" type="synonym">excC</name>
    <name type="ordered locus">b0741</name>
    <name type="ordered locus">JW0731</name>
</gene>
<name>PAL_ECOLI</name>
<protein>
    <recommendedName>
        <fullName evidence="1 15">Peptidoglycan-associated lipoprotein</fullName>
        <shortName evidence="1 16">PAL</shortName>
    </recommendedName>
    <alternativeName>
        <fullName evidence="16">Tol-Pal system lipoprotein Pal</fullName>
    </alternativeName>
</protein>